<gene>
    <name evidence="1" type="primary">psbK</name>
</gene>
<name>PSBK_SINAL</name>
<reference key="1">
    <citation type="journal article" date="1989" name="Nucleic Acids Res.">
        <title>Nucleotide sequence of the chloroplast genes for tRNA(Gln) and the 4 kD K polypeptide of photosystem II from mustard (Sinapis alba).</title>
        <authorList>
            <person name="Neuhaus H."/>
        </authorList>
    </citation>
    <scope>NUCLEOTIDE SEQUENCE [GENOMIC DNA]</scope>
</reference>
<feature type="propeptide" id="PRO_0000029525" evidence="1">
    <location>
        <begin position="1"/>
        <end position="24"/>
    </location>
</feature>
<feature type="chain" id="PRO_0000029526" description="Photosystem II reaction center protein K" evidence="1">
    <location>
        <begin position="25"/>
        <end position="61"/>
    </location>
</feature>
<feature type="transmembrane region" description="Helical" evidence="1">
    <location>
        <begin position="40"/>
        <end position="60"/>
    </location>
</feature>
<sequence>MLNIFNLICICFNSALFSSTFLVAKLPEAYAFLNPIVDVMPVIPLFFLLLAFVWQAAVSFR</sequence>
<keyword id="KW-0150">Chloroplast</keyword>
<keyword id="KW-0472">Membrane</keyword>
<keyword id="KW-0602">Photosynthesis</keyword>
<keyword id="KW-0604">Photosystem II</keyword>
<keyword id="KW-0934">Plastid</keyword>
<keyword id="KW-0674">Reaction center</keyword>
<keyword id="KW-0793">Thylakoid</keyword>
<keyword id="KW-0812">Transmembrane</keyword>
<keyword id="KW-1133">Transmembrane helix</keyword>
<geneLocation type="chloroplast"/>
<proteinExistence type="inferred from homology"/>
<organism>
    <name type="scientific">Sinapis alba</name>
    <name type="common">White mustard</name>
    <name type="synonym">Brassica hirta</name>
    <dbReference type="NCBI Taxonomy" id="3728"/>
    <lineage>
        <taxon>Eukaryota</taxon>
        <taxon>Viridiplantae</taxon>
        <taxon>Streptophyta</taxon>
        <taxon>Embryophyta</taxon>
        <taxon>Tracheophyta</taxon>
        <taxon>Spermatophyta</taxon>
        <taxon>Magnoliopsida</taxon>
        <taxon>eudicotyledons</taxon>
        <taxon>Gunneridae</taxon>
        <taxon>Pentapetalae</taxon>
        <taxon>rosids</taxon>
        <taxon>malvids</taxon>
        <taxon>Brassicales</taxon>
        <taxon>Brassicaceae</taxon>
        <taxon>Brassiceae</taxon>
        <taxon>Sinapis</taxon>
    </lineage>
</organism>
<accession>P10347</accession>
<dbReference type="EMBL" id="X13558">
    <property type="protein sequence ID" value="CAA31909.1"/>
    <property type="molecule type" value="Genomic_DNA"/>
</dbReference>
<dbReference type="PIR" id="S02115">
    <property type="entry name" value="S02115"/>
</dbReference>
<dbReference type="RefSeq" id="YP_009730650.1">
    <property type="nucleotide sequence ID" value="NC_045948.1"/>
</dbReference>
<dbReference type="SMR" id="P10347"/>
<dbReference type="GeneID" id="43960579"/>
<dbReference type="OrthoDB" id="1673137at2759"/>
<dbReference type="GO" id="GO:0009535">
    <property type="term" value="C:chloroplast thylakoid membrane"/>
    <property type="evidence" value="ECO:0007669"/>
    <property type="project" value="UniProtKB-SubCell"/>
</dbReference>
<dbReference type="GO" id="GO:0009539">
    <property type="term" value="C:photosystem II reaction center"/>
    <property type="evidence" value="ECO:0007669"/>
    <property type="project" value="InterPro"/>
</dbReference>
<dbReference type="GO" id="GO:0015979">
    <property type="term" value="P:photosynthesis"/>
    <property type="evidence" value="ECO:0007669"/>
    <property type="project" value="UniProtKB-UniRule"/>
</dbReference>
<dbReference type="HAMAP" id="MF_00441">
    <property type="entry name" value="PSII_PsbK"/>
    <property type="match status" value="1"/>
</dbReference>
<dbReference type="InterPro" id="IPR003687">
    <property type="entry name" value="PSII_PsbK"/>
</dbReference>
<dbReference type="InterPro" id="IPR037270">
    <property type="entry name" value="PSII_PsbK_sf"/>
</dbReference>
<dbReference type="NCBIfam" id="NF002715">
    <property type="entry name" value="PRK02553.1"/>
    <property type="match status" value="1"/>
</dbReference>
<dbReference type="PANTHER" id="PTHR35325">
    <property type="match status" value="1"/>
</dbReference>
<dbReference type="PANTHER" id="PTHR35325:SF1">
    <property type="entry name" value="PHOTOSYSTEM II REACTION CENTER PROTEIN K"/>
    <property type="match status" value="1"/>
</dbReference>
<dbReference type="Pfam" id="PF02533">
    <property type="entry name" value="PsbK"/>
    <property type="match status" value="1"/>
</dbReference>
<dbReference type="SUPFAM" id="SSF161037">
    <property type="entry name" value="Photosystem II reaction center protein K, PsbK"/>
    <property type="match status" value="1"/>
</dbReference>
<evidence type="ECO:0000255" key="1">
    <source>
        <dbReference type="HAMAP-Rule" id="MF_00441"/>
    </source>
</evidence>
<comment type="function">
    <text evidence="1">One of the components of the core complex of photosystem II (PSII). PSII is a light-driven water:plastoquinone oxidoreductase that uses light energy to abstract electrons from H(2)O, generating O(2) and a proton gradient subsequently used for ATP formation. It consists of a core antenna complex that captures photons, and an electron transfer chain that converts photonic excitation into a charge separation.</text>
</comment>
<comment type="subunit">
    <text evidence="1">PSII is composed of 1 copy each of membrane proteins PsbA, PsbB, PsbC, PsbD, PsbE, PsbF, PsbH, PsbI, PsbJ, PsbK, PsbL, PsbM, PsbT, PsbX, PsbY, PsbZ, Psb30/Ycf12, at least 3 peripheral proteins of the oxygen-evolving complex and a large number of cofactors. It forms dimeric complexes.</text>
</comment>
<comment type="subcellular location">
    <subcellularLocation>
        <location evidence="1">Plastid</location>
        <location evidence="1">Chloroplast thylakoid membrane</location>
        <topology evidence="1">Single-pass membrane protein</topology>
    </subcellularLocation>
</comment>
<comment type="similarity">
    <text evidence="1">Belongs to the PsbK family.</text>
</comment>
<protein>
    <recommendedName>
        <fullName evidence="1">Photosystem II reaction center protein K</fullName>
        <shortName evidence="1">PSII-K</shortName>
    </recommendedName>
</protein>